<proteinExistence type="evidence at transcript level"/>
<feature type="chain" id="PRO_0000288491" description="S-phase kinase-associated protein 1">
    <location>
        <begin position="1"/>
        <end position="163"/>
    </location>
</feature>
<feature type="region of interest" description="Disordered" evidence="4">
    <location>
        <begin position="63"/>
        <end position="83"/>
    </location>
</feature>
<feature type="region of interest" description="Interaction with the F-box domain of F-box proteins" evidence="1">
    <location>
        <begin position="104"/>
        <end position="163"/>
    </location>
</feature>
<feature type="modified residue" description="Phosphothreonine" evidence="2">
    <location>
        <position position="131"/>
    </location>
</feature>
<feature type="cross-link" description="Glycyl lysine isopeptide (Lys-Gly) (interchain with G-Cter in SUMO1)" evidence="2">
    <location>
        <position position="142"/>
    </location>
</feature>
<protein>
    <recommendedName>
        <fullName>S-phase kinase-associated protein 1</fullName>
    </recommendedName>
    <alternativeName>
        <fullName>Cyclin-A/CDK2-associated protein p19</fullName>
    </alternativeName>
    <alternativeName>
        <fullName>S-phase kinase-associated protein 1A</fullName>
    </alternativeName>
    <alternativeName>
        <fullName>p19A</fullName>
    </alternativeName>
    <alternativeName>
        <fullName>p19skp1</fullName>
    </alternativeName>
</protein>
<reference key="1">
    <citation type="submission" date="2005-06" db="EMBL/GenBank/DDBJ databases">
        <title>DNA sequences of macaque genes expressed in brain or testis and its evolutionary implications.</title>
        <authorList>
            <consortium name="International consortium for macaque cDNA sequencing and analysis"/>
        </authorList>
    </citation>
    <scope>NUCLEOTIDE SEQUENCE [LARGE SCALE MRNA]</scope>
    <source>
        <tissue>Temporal cortex</tissue>
        <tissue>Testis</tissue>
    </source>
</reference>
<accession>Q4R5B9</accession>
<accession>Q4R644</accession>
<gene>
    <name type="primary">SKP1</name>
    <name type="synonym">SKP1A</name>
    <name type="ORF">QtrA-12126</name>
    <name type="ORF">QtsA-19170</name>
</gene>
<comment type="function">
    <text evidence="2">Essential component of the SCF (SKP1-CUL1-F-box protein) ubiquitin ligase complex, which mediates the ubiquitination of proteins involved in cell cycle progression, signal transduction and transcription. In the SCF complex, serves as an adapter that links the F-box protein to CUL1. The functional specificity of the SCF complex depends on the F-box protein as substrate recognition component. SCF(BTRC) and SCF(FBXW11) direct ubiquitination of CTNNB1 and participate in Wnt signaling. SCF(FBXW11) directs ubiquitination of phosphorylated NFKBIA. SCF(BTRC) directs ubiquitination of NFKBIB, NFKBIE, ATF4, SMAD3, SMAD4, CDC25A, FBXO5, CEP68 and probably NFKB2. SCF(SKP2) directs ubiquitination of phosphorylated CDKN1B/p27kip and is involved in regulation of G1/S transition. SCF(SKP2) directs ubiquitination of ORC1, CDT1, RBL2, ELF4, CDKN1A, RAG2, FOXO1A, and probably MYC and TAL1. SCF(FBXW7) directs ubiquitination of cyclin E, NOTCH1 released notch intracellular domain (NICD), and probably PSEN1. SCF(FBXW2) directs ubiquitination of GCM1. SCF(FBXO32) directs ubiquitination of MYOD1. SCF(FBXO7) directs ubiquitination of BIRC2 and DLGAP5. SCF(FBXO33) directs ubiquitination of YBX1. SCF(FBXO11) directs ubiquitination of BCL6 and DTL but does not seem to direct ubiquitination of TP53. SCF(BTRC) mediates the ubiquitination of NFKBIA at 'Lys-21' and 'Lys-22'; the degradation frees the associated NFKB1-RELA dimer to translocate into the nucleus and to activate transcription. SCF(CCNF) directs ubiquitination of CCP110. SCF(FBXL3) and SCF(FBXL21) direct ubiquitination of CRY1 and CRY2. SCF(FBXO9) directs ubiquitination of TTI1 and TELO2. SCF(FBXO10) directs ubiquitination of BCL2. Core component of the Cul7-RING(FBXW8) ubiquitin ligase complex, which mediates the ubiquitination and subsequent proteasomal degradation of target proteins. Also acts as a core component of the Cul1-RING(FBXL4) ubiquitin ligase complex, which mediates the ubiquitination and subsequent proteasomal degradation of BNIP3 and BNIP3L (By similarity).</text>
</comment>
<comment type="pathway">
    <text>Protein modification; protein ubiquitination.</text>
</comment>
<comment type="subunit">
    <text evidence="2 3">Interacts with KDM2B, forming heterodimers (By similarity). The KDM2B-SKP1 heterodimeric complex interacts with the PCGF1-BCORL heterodimeric complex to form a homotetrameric polycomb repression complex 1 (PRC1.1) (By similarity). Component of multiple SCF (SKP1-CUL1-F-box) E3 ubiquitin-protein ligase complexes formed of CUL1, SKP1, RBX1 and a variable F-box domain-containing protein as substrate-specific subunit. Component of the SCF(FBXW11) complex containing FBXW11. Component of the SCF(SKP2) complex containing SKP2, in which it interacts directly with SKP1, SKP2 and RBX1. Component of the SCF(FBXW2) complex containing FBXw2. Component of the SCF(FBXO32) complex containing FBXO32. Component of the probable SCF(FBXO7) complex containing FBXO7. Component of the SCF(FBXO10) complex containing FBXO10. Component of the SCF(FBXO11) complex containing FBXO11. Component of the SCF(FBXO25) complex containing FBXO25. Component of the SCF(FBXO33) complex containing FBXO33. Component of the probable SCF(FBXO4) complex containing FBXO4. Component of the SCF(FBXO44) complex, composed of SKP1, CUL1 and FBXO44. Component of the SCF(BTRC) complex, composed of SKP1, CUL1 and BTRC. This complex binds phosphorylated NFKBIA. Part of a SCF complex consisting of CUL1, RBX1, SKP1 and FBXO2. Component of a SCF(SKP2)-like complex containing CUL1, SKP1, TRIM21 and SKP2. Component of the SCF(FBXO17) complex, composed of SKP1, CUL1 and FBXO17. Component of the SCF(FBXO27) complex, composed of SKP1, CUL1 and FBXO27. Component of the SCF(CCNF) complex consisting of CUL1, RBX1, SKP1 and CCNF. Component of the SCF(FBXL3) complex composed of CUL1, SKP1, RBX1 and FBXL3. Component of the SCF(FBXL21) complex composed of CUL1, SKP1, RBX1 and FBXL21. Component of the SCF(FBXO9) composed of CUL1, SKP1, RBX1 and FBXO9. Component of the SCF(FBXW7) composed of CUL1, SKP1, RBX1 and FBXW7. Component of the SCF(FBXO31) complex composed of CUL1, SKP1, RBX1 and FBXO31 (By similarity). Interacts with CEP68 (By similarity). Interacts with FBXW15 and NOTHC2 (By similarity). The SKP1-KDM2A and SKP1-KDM2B complexes interact with UBB (By similarity). Component of the Cul7-RING(FBXW8) complex consisting of CUL7, RBX1, SKP1 and FBXW8; within the complex interacts with FBXW8 (By similarity). Interacts with BCORL1 (By similarity). Interacts with FBXL4 (By similarity).</text>
</comment>
<comment type="PTM">
    <text evidence="3">Undergoes autophagy-mediated degradation in the liver in a time-dependent manner.</text>
</comment>
<comment type="similarity">
    <text evidence="5">Belongs to the SKP1 family.</text>
</comment>
<comment type="sequence caution" evidence="5">
    <conflict type="frameshift">
        <sequence resource="EMBL-CDS" id="BAE01431"/>
    </conflict>
</comment>
<keyword id="KW-1017">Isopeptide bond</keyword>
<keyword id="KW-0597">Phosphoprotein</keyword>
<keyword id="KW-1185">Reference proteome</keyword>
<keyword id="KW-0832">Ubl conjugation</keyword>
<keyword id="KW-0833">Ubl conjugation pathway</keyword>
<name>SKP1_MACFA</name>
<organism>
    <name type="scientific">Macaca fascicularis</name>
    <name type="common">Crab-eating macaque</name>
    <name type="synonym">Cynomolgus monkey</name>
    <dbReference type="NCBI Taxonomy" id="9541"/>
    <lineage>
        <taxon>Eukaryota</taxon>
        <taxon>Metazoa</taxon>
        <taxon>Chordata</taxon>
        <taxon>Craniata</taxon>
        <taxon>Vertebrata</taxon>
        <taxon>Euteleostomi</taxon>
        <taxon>Mammalia</taxon>
        <taxon>Eutheria</taxon>
        <taxon>Euarchontoglires</taxon>
        <taxon>Primates</taxon>
        <taxon>Haplorrhini</taxon>
        <taxon>Catarrhini</taxon>
        <taxon>Cercopithecidae</taxon>
        <taxon>Cercopithecinae</taxon>
        <taxon>Macaca</taxon>
    </lineage>
</organism>
<sequence>MPSIKLQSSDGEIFEVDVEIAKQSVTIKTMLEDLGMDDEGDDDPVPLPNVNAAILKKVIQWCTHHKDDPPPPEDDENKEKRTDDIPVWDQEFLKVDQGTLFELILAANYLDIKGLLDVTCKTVANMIKGKTPEEIRKTFNIKNDFTEEEEAQVRKENQWCEEK</sequence>
<evidence type="ECO:0000250" key="1"/>
<evidence type="ECO:0000250" key="2">
    <source>
        <dbReference type="UniProtKB" id="P63208"/>
    </source>
</evidence>
<evidence type="ECO:0000250" key="3">
    <source>
        <dbReference type="UniProtKB" id="Q9WTX5"/>
    </source>
</evidence>
<evidence type="ECO:0000256" key="4">
    <source>
        <dbReference type="SAM" id="MobiDB-lite"/>
    </source>
</evidence>
<evidence type="ECO:0000305" key="5"/>
<dbReference type="EMBL" id="AB169346">
    <property type="protein sequence ID" value="BAE01431.1"/>
    <property type="status" value="ALT_FRAME"/>
    <property type="molecule type" value="mRNA"/>
</dbReference>
<dbReference type="EMBL" id="AB169625">
    <property type="protein sequence ID" value="BAE01706.1"/>
    <property type="molecule type" value="mRNA"/>
</dbReference>
<dbReference type="RefSeq" id="XP_045250842.1">
    <property type="nucleotide sequence ID" value="XM_045394907.2"/>
</dbReference>
<dbReference type="RefSeq" id="XP_045250843.1">
    <property type="nucleotide sequence ID" value="XM_045394908.2"/>
</dbReference>
<dbReference type="SMR" id="Q4R5B9"/>
<dbReference type="STRING" id="9541.ENSMFAP00000043769"/>
<dbReference type="Ensembl" id="ENSMFAT00000090014.1">
    <property type="protein sequence ID" value="ENSMFAP00000054831.1"/>
    <property type="gene ID" value="ENSMFAG00000052365.1"/>
</dbReference>
<dbReference type="GeneID" id="102142637"/>
<dbReference type="eggNOG" id="KOG1724">
    <property type="taxonomic scope" value="Eukaryota"/>
</dbReference>
<dbReference type="GeneTree" id="ENSGT00390000012652"/>
<dbReference type="UniPathway" id="UPA00143"/>
<dbReference type="Proteomes" id="UP000233100">
    <property type="component" value="Chromosome 1"/>
</dbReference>
<dbReference type="GO" id="GO:0031467">
    <property type="term" value="C:Cul7-RING ubiquitin ligase complex"/>
    <property type="evidence" value="ECO:0000250"/>
    <property type="project" value="UniProtKB"/>
</dbReference>
<dbReference type="GO" id="GO:0005829">
    <property type="term" value="C:cytosol"/>
    <property type="evidence" value="ECO:0000250"/>
    <property type="project" value="UniProtKB"/>
</dbReference>
<dbReference type="GO" id="GO:0031519">
    <property type="term" value="C:PcG protein complex"/>
    <property type="evidence" value="ECO:0007669"/>
    <property type="project" value="Ensembl"/>
</dbReference>
<dbReference type="GO" id="GO:0019005">
    <property type="term" value="C:SCF ubiquitin ligase complex"/>
    <property type="evidence" value="ECO:0000250"/>
    <property type="project" value="UniProtKB"/>
</dbReference>
<dbReference type="GO" id="GO:0008013">
    <property type="term" value="F:beta-catenin binding"/>
    <property type="evidence" value="ECO:0007669"/>
    <property type="project" value="Ensembl"/>
</dbReference>
<dbReference type="GO" id="GO:0097602">
    <property type="term" value="F:cullin family protein binding"/>
    <property type="evidence" value="ECO:0007669"/>
    <property type="project" value="Ensembl"/>
</dbReference>
<dbReference type="GO" id="GO:1990444">
    <property type="term" value="F:F-box domain binding"/>
    <property type="evidence" value="ECO:0007669"/>
    <property type="project" value="Ensembl"/>
</dbReference>
<dbReference type="GO" id="GO:0140677">
    <property type="term" value="F:molecular function activator activity"/>
    <property type="evidence" value="ECO:0007669"/>
    <property type="project" value="Ensembl"/>
</dbReference>
<dbReference type="GO" id="GO:0160072">
    <property type="term" value="F:ubiquitin ligase complex scaffold activity"/>
    <property type="evidence" value="ECO:0007669"/>
    <property type="project" value="Ensembl"/>
</dbReference>
<dbReference type="GO" id="GO:1990756">
    <property type="term" value="F:ubiquitin-like ligase-substrate adaptor activity"/>
    <property type="evidence" value="ECO:0007669"/>
    <property type="project" value="Ensembl"/>
</dbReference>
<dbReference type="GO" id="GO:0006338">
    <property type="term" value="P:chromatin remodeling"/>
    <property type="evidence" value="ECO:0007669"/>
    <property type="project" value="Ensembl"/>
</dbReference>
<dbReference type="GO" id="GO:0051457">
    <property type="term" value="P:maintenance of protein location in nucleus"/>
    <property type="evidence" value="ECO:0007669"/>
    <property type="project" value="Ensembl"/>
</dbReference>
<dbReference type="GO" id="GO:0070936">
    <property type="term" value="P:protein K48-linked ubiquitination"/>
    <property type="evidence" value="ECO:0007669"/>
    <property type="project" value="Ensembl"/>
</dbReference>
<dbReference type="GO" id="GO:0031146">
    <property type="term" value="P:SCF-dependent proteasomal ubiquitin-dependent protein catabolic process"/>
    <property type="evidence" value="ECO:0000250"/>
    <property type="project" value="UniProtKB"/>
</dbReference>
<dbReference type="CDD" id="cd18322">
    <property type="entry name" value="BTB_POZ_SKP1"/>
    <property type="match status" value="1"/>
</dbReference>
<dbReference type="FunFam" id="3.30.710.10:FF:000270">
    <property type="entry name" value="S-phase kinase-associated protein 1"/>
    <property type="match status" value="1"/>
</dbReference>
<dbReference type="Gene3D" id="3.30.710.10">
    <property type="entry name" value="Potassium Channel Kv1.1, Chain A"/>
    <property type="match status" value="1"/>
</dbReference>
<dbReference type="InterPro" id="IPR016897">
    <property type="entry name" value="SKP1"/>
</dbReference>
<dbReference type="InterPro" id="IPR001232">
    <property type="entry name" value="SKP1-like"/>
</dbReference>
<dbReference type="InterPro" id="IPR036296">
    <property type="entry name" value="SKP1-like_dim_sf"/>
</dbReference>
<dbReference type="InterPro" id="IPR011333">
    <property type="entry name" value="SKP1/BTB/POZ_sf"/>
</dbReference>
<dbReference type="InterPro" id="IPR016072">
    <property type="entry name" value="Skp1_comp_dimer"/>
</dbReference>
<dbReference type="InterPro" id="IPR016073">
    <property type="entry name" value="Skp1_comp_POZ"/>
</dbReference>
<dbReference type="PANTHER" id="PTHR11165">
    <property type="entry name" value="SKP1"/>
    <property type="match status" value="1"/>
</dbReference>
<dbReference type="Pfam" id="PF01466">
    <property type="entry name" value="Skp1"/>
    <property type="match status" value="1"/>
</dbReference>
<dbReference type="Pfam" id="PF03931">
    <property type="entry name" value="Skp1_POZ"/>
    <property type="match status" value="1"/>
</dbReference>
<dbReference type="PIRSF" id="PIRSF028729">
    <property type="entry name" value="E3_ubiquit_lig_SCF_Skp"/>
    <property type="match status" value="1"/>
</dbReference>
<dbReference type="SMART" id="SM00512">
    <property type="entry name" value="Skp1"/>
    <property type="match status" value="1"/>
</dbReference>
<dbReference type="SUPFAM" id="SSF54695">
    <property type="entry name" value="POZ domain"/>
    <property type="match status" value="1"/>
</dbReference>
<dbReference type="SUPFAM" id="SSF81382">
    <property type="entry name" value="Skp1 dimerisation domain-like"/>
    <property type="match status" value="1"/>
</dbReference>